<keyword id="KW-0378">Hydrolase</keyword>
<keyword id="KW-0460">Magnesium</keyword>
<keyword id="KW-0464">Manganese</keyword>
<keyword id="KW-0479">Metal-binding</keyword>
<keyword id="KW-0496">Mitochondrion</keyword>
<keyword id="KW-0904">Protein phosphatase</keyword>
<keyword id="KW-1267">Proteomics identification</keyword>
<keyword id="KW-1185">Reference proteome</keyword>
<keyword id="KW-0809">Transit peptide</keyword>
<feature type="transit peptide" description="Mitochondrion" evidence="4">
    <location>
        <begin position="1"/>
        <end position="66"/>
    </location>
</feature>
<feature type="chain" id="PRO_0000025421" description="[Pyruvate dehydrogenase [acetyl-transferring]]-phosphatase 2, mitochondrial">
    <location>
        <begin position="67"/>
        <end position="529"/>
    </location>
</feature>
<feature type="domain" description="PPM-type phosphatase" evidence="5">
    <location>
        <begin position="106"/>
        <end position="517"/>
    </location>
</feature>
<feature type="binding site" evidence="2">
    <location>
        <position position="141"/>
    </location>
    <ligand>
        <name>Mn(2+)</name>
        <dbReference type="ChEBI" id="CHEBI:29035"/>
        <label>1</label>
    </ligand>
</feature>
<feature type="binding site" evidence="2">
    <location>
        <position position="141"/>
    </location>
    <ligand>
        <name>Mn(2+)</name>
        <dbReference type="ChEBI" id="CHEBI:29035"/>
        <label>2</label>
    </ligand>
</feature>
<feature type="binding site" evidence="2">
    <location>
        <position position="142"/>
    </location>
    <ligand>
        <name>Mn(2+)</name>
        <dbReference type="ChEBI" id="CHEBI:29035"/>
        <label>1</label>
    </ligand>
</feature>
<feature type="binding site" evidence="2">
    <location>
        <position position="412"/>
    </location>
    <ligand>
        <name>Mn(2+)</name>
        <dbReference type="ChEBI" id="CHEBI:29035"/>
        <label>2</label>
    </ligand>
</feature>
<feature type="binding site" evidence="2">
    <location>
        <position position="508"/>
    </location>
    <ligand>
        <name>Mn(2+)</name>
        <dbReference type="ChEBI" id="CHEBI:29035"/>
        <label>2</label>
    </ligand>
</feature>
<comment type="function">
    <text evidence="1 3">Mitochondrial enzyme that catalyzes the dephosphorylation and concomitant reactivation of the alpha subunit of the E1 component of the pyruvate dehydrogenase complex (PDC), thereby stimulating the conversion of pyruvate into acetyl-CoA (By similarity). Acts as a crucial regulator of T cell metabolism and function, with a particular focus on T-helper Th17 (By similarity).</text>
</comment>
<comment type="catalytic activity">
    <reaction evidence="1">
        <text>O-phospho-L-seryl-[pyruvate dehydrogenase E1 alpha subunit] + H2O = L-seryl-[pyruvate dehydrogenase E1 alpha subunit] + phosphate</text>
        <dbReference type="Rhea" id="RHEA:12669"/>
        <dbReference type="Rhea" id="RHEA-COMP:13689"/>
        <dbReference type="Rhea" id="RHEA-COMP:13690"/>
        <dbReference type="ChEBI" id="CHEBI:15377"/>
        <dbReference type="ChEBI" id="CHEBI:29999"/>
        <dbReference type="ChEBI" id="CHEBI:43474"/>
        <dbReference type="ChEBI" id="CHEBI:83421"/>
        <dbReference type="EC" id="3.1.3.43"/>
    </reaction>
    <physiologicalReaction direction="left-to-right" evidence="1">
        <dbReference type="Rhea" id="RHEA:12670"/>
    </physiologicalReaction>
</comment>
<comment type="cofactor">
    <cofactor evidence="1">
        <name>Mg(2+)</name>
        <dbReference type="ChEBI" id="CHEBI:18420"/>
    </cofactor>
    <text evidence="2">Binds 2 magnesium ions per subunit.</text>
</comment>
<comment type="subcellular location">
    <subcellularLocation>
        <location evidence="1">Mitochondrion</location>
    </subcellularLocation>
</comment>
<comment type="similarity">
    <text evidence="6">Belongs to the PP2C family.</text>
</comment>
<comment type="sequence caution" evidence="6">
    <conflict type="erroneous initiation">
        <sequence resource="EMBL-CDS" id="BAA92586"/>
    </conflict>
    <text>Extended N-terminus.</text>
</comment>
<accession>Q9P2J9</accession>
<accession>A8K924</accession>
<gene>
    <name evidence="7" type="primary">PDP2</name>
    <name type="synonym">KIAA1348</name>
</gene>
<protein>
    <recommendedName>
        <fullName>[Pyruvate dehydrogenase [acetyl-transferring]]-phosphatase 2, mitochondrial</fullName>
        <shortName>PDP 2</shortName>
        <ecNumber evidence="1">3.1.3.43</ecNumber>
    </recommendedName>
    <alternativeName>
        <fullName>Pyruvate dehydrogenase phosphatase catalytic subunit 2</fullName>
        <shortName>PDPC 2</shortName>
    </alternativeName>
</protein>
<organism>
    <name type="scientific">Homo sapiens</name>
    <name type="common">Human</name>
    <dbReference type="NCBI Taxonomy" id="9606"/>
    <lineage>
        <taxon>Eukaryota</taxon>
        <taxon>Metazoa</taxon>
        <taxon>Chordata</taxon>
        <taxon>Craniata</taxon>
        <taxon>Vertebrata</taxon>
        <taxon>Euteleostomi</taxon>
        <taxon>Mammalia</taxon>
        <taxon>Eutheria</taxon>
        <taxon>Euarchontoglires</taxon>
        <taxon>Primates</taxon>
        <taxon>Haplorrhini</taxon>
        <taxon>Catarrhini</taxon>
        <taxon>Hominidae</taxon>
        <taxon>Homo</taxon>
    </lineage>
</organism>
<reference key="1">
    <citation type="journal article" date="2000" name="DNA Res.">
        <title>Prediction of the coding sequences of unidentified human genes. XVI. The complete sequences of 150 new cDNA clones from brain which code for large proteins in vitro.</title>
        <authorList>
            <person name="Nagase T."/>
            <person name="Kikuno R."/>
            <person name="Ishikawa K."/>
            <person name="Hirosawa M."/>
            <person name="Ohara O."/>
        </authorList>
    </citation>
    <scope>NUCLEOTIDE SEQUENCE [LARGE SCALE MRNA]</scope>
    <source>
        <tissue>Brain</tissue>
    </source>
</reference>
<reference key="2">
    <citation type="journal article" date="2004" name="Nat. Genet.">
        <title>Complete sequencing and characterization of 21,243 full-length human cDNAs.</title>
        <authorList>
            <person name="Ota T."/>
            <person name="Suzuki Y."/>
            <person name="Nishikawa T."/>
            <person name="Otsuki T."/>
            <person name="Sugiyama T."/>
            <person name="Irie R."/>
            <person name="Wakamatsu A."/>
            <person name="Hayashi K."/>
            <person name="Sato H."/>
            <person name="Nagai K."/>
            <person name="Kimura K."/>
            <person name="Makita H."/>
            <person name="Sekine M."/>
            <person name="Obayashi M."/>
            <person name="Nishi T."/>
            <person name="Shibahara T."/>
            <person name="Tanaka T."/>
            <person name="Ishii S."/>
            <person name="Yamamoto J."/>
            <person name="Saito K."/>
            <person name="Kawai Y."/>
            <person name="Isono Y."/>
            <person name="Nakamura Y."/>
            <person name="Nagahari K."/>
            <person name="Murakami K."/>
            <person name="Yasuda T."/>
            <person name="Iwayanagi T."/>
            <person name="Wagatsuma M."/>
            <person name="Shiratori A."/>
            <person name="Sudo H."/>
            <person name="Hosoiri T."/>
            <person name="Kaku Y."/>
            <person name="Kodaira H."/>
            <person name="Kondo H."/>
            <person name="Sugawara M."/>
            <person name="Takahashi M."/>
            <person name="Kanda K."/>
            <person name="Yokoi T."/>
            <person name="Furuya T."/>
            <person name="Kikkawa E."/>
            <person name="Omura Y."/>
            <person name="Abe K."/>
            <person name="Kamihara K."/>
            <person name="Katsuta N."/>
            <person name="Sato K."/>
            <person name="Tanikawa M."/>
            <person name="Yamazaki M."/>
            <person name="Ninomiya K."/>
            <person name="Ishibashi T."/>
            <person name="Yamashita H."/>
            <person name="Murakawa K."/>
            <person name="Fujimori K."/>
            <person name="Tanai H."/>
            <person name="Kimata M."/>
            <person name="Watanabe M."/>
            <person name="Hiraoka S."/>
            <person name="Chiba Y."/>
            <person name="Ishida S."/>
            <person name="Ono Y."/>
            <person name="Takiguchi S."/>
            <person name="Watanabe S."/>
            <person name="Yosida M."/>
            <person name="Hotuta T."/>
            <person name="Kusano J."/>
            <person name="Kanehori K."/>
            <person name="Takahashi-Fujii A."/>
            <person name="Hara H."/>
            <person name="Tanase T.-O."/>
            <person name="Nomura Y."/>
            <person name="Togiya S."/>
            <person name="Komai F."/>
            <person name="Hara R."/>
            <person name="Takeuchi K."/>
            <person name="Arita M."/>
            <person name="Imose N."/>
            <person name="Musashino K."/>
            <person name="Yuuki H."/>
            <person name="Oshima A."/>
            <person name="Sasaki N."/>
            <person name="Aotsuka S."/>
            <person name="Yoshikawa Y."/>
            <person name="Matsunawa H."/>
            <person name="Ichihara T."/>
            <person name="Shiohata N."/>
            <person name="Sano S."/>
            <person name="Moriya S."/>
            <person name="Momiyama H."/>
            <person name="Satoh N."/>
            <person name="Takami S."/>
            <person name="Terashima Y."/>
            <person name="Suzuki O."/>
            <person name="Nakagawa S."/>
            <person name="Senoh A."/>
            <person name="Mizoguchi H."/>
            <person name="Goto Y."/>
            <person name="Shimizu F."/>
            <person name="Wakebe H."/>
            <person name="Hishigaki H."/>
            <person name="Watanabe T."/>
            <person name="Sugiyama A."/>
            <person name="Takemoto M."/>
            <person name="Kawakami B."/>
            <person name="Yamazaki M."/>
            <person name="Watanabe K."/>
            <person name="Kumagai A."/>
            <person name="Itakura S."/>
            <person name="Fukuzumi Y."/>
            <person name="Fujimori Y."/>
            <person name="Komiyama M."/>
            <person name="Tashiro H."/>
            <person name="Tanigami A."/>
            <person name="Fujiwara T."/>
            <person name="Ono T."/>
            <person name="Yamada K."/>
            <person name="Fujii Y."/>
            <person name="Ozaki K."/>
            <person name="Hirao M."/>
            <person name="Ohmori Y."/>
            <person name="Kawabata A."/>
            <person name="Hikiji T."/>
            <person name="Kobatake N."/>
            <person name="Inagaki H."/>
            <person name="Ikema Y."/>
            <person name="Okamoto S."/>
            <person name="Okitani R."/>
            <person name="Kawakami T."/>
            <person name="Noguchi S."/>
            <person name="Itoh T."/>
            <person name="Shigeta K."/>
            <person name="Senba T."/>
            <person name="Matsumura K."/>
            <person name="Nakajima Y."/>
            <person name="Mizuno T."/>
            <person name="Morinaga M."/>
            <person name="Sasaki M."/>
            <person name="Togashi T."/>
            <person name="Oyama M."/>
            <person name="Hata H."/>
            <person name="Watanabe M."/>
            <person name="Komatsu T."/>
            <person name="Mizushima-Sugano J."/>
            <person name="Satoh T."/>
            <person name="Shirai Y."/>
            <person name="Takahashi Y."/>
            <person name="Nakagawa K."/>
            <person name="Okumura K."/>
            <person name="Nagase T."/>
            <person name="Nomura N."/>
            <person name="Kikuchi H."/>
            <person name="Masuho Y."/>
            <person name="Yamashita R."/>
            <person name="Nakai K."/>
            <person name="Yada T."/>
            <person name="Nakamura Y."/>
            <person name="Ohara O."/>
            <person name="Isogai T."/>
            <person name="Sugano S."/>
        </authorList>
    </citation>
    <scope>NUCLEOTIDE SEQUENCE [LARGE SCALE MRNA]</scope>
    <source>
        <tissue>Testis</tissue>
    </source>
</reference>
<reference key="3">
    <citation type="submission" date="2005-07" db="EMBL/GenBank/DDBJ databases">
        <authorList>
            <person name="Mural R.J."/>
            <person name="Istrail S."/>
            <person name="Sutton G.G."/>
            <person name="Florea L."/>
            <person name="Halpern A.L."/>
            <person name="Mobarry C.M."/>
            <person name="Lippert R."/>
            <person name="Walenz B."/>
            <person name="Shatkay H."/>
            <person name="Dew I."/>
            <person name="Miller J.R."/>
            <person name="Flanigan M.J."/>
            <person name="Edwards N.J."/>
            <person name="Bolanos R."/>
            <person name="Fasulo D."/>
            <person name="Halldorsson B.V."/>
            <person name="Hannenhalli S."/>
            <person name="Turner R."/>
            <person name="Yooseph S."/>
            <person name="Lu F."/>
            <person name="Nusskern D.R."/>
            <person name="Shue B.C."/>
            <person name="Zheng X.H."/>
            <person name="Zhong F."/>
            <person name="Delcher A.L."/>
            <person name="Huson D.H."/>
            <person name="Kravitz S.A."/>
            <person name="Mouchard L."/>
            <person name="Reinert K."/>
            <person name="Remington K.A."/>
            <person name="Clark A.G."/>
            <person name="Waterman M.S."/>
            <person name="Eichler E.E."/>
            <person name="Adams M.D."/>
            <person name="Hunkapiller M.W."/>
            <person name="Myers E.W."/>
            <person name="Venter J.C."/>
        </authorList>
    </citation>
    <scope>NUCLEOTIDE SEQUENCE [LARGE SCALE GENOMIC DNA]</scope>
</reference>
<reference key="4">
    <citation type="journal article" date="2004" name="Genome Res.">
        <title>The status, quality, and expansion of the NIH full-length cDNA project: the Mammalian Gene Collection (MGC).</title>
        <authorList>
            <consortium name="The MGC Project Team"/>
        </authorList>
    </citation>
    <scope>NUCLEOTIDE SEQUENCE [LARGE SCALE MRNA]</scope>
    <source>
        <tissue>Brain</tissue>
    </source>
</reference>
<evidence type="ECO:0000250" key="1">
    <source>
        <dbReference type="UniProtKB" id="O88484"/>
    </source>
</evidence>
<evidence type="ECO:0000250" key="2">
    <source>
        <dbReference type="UniProtKB" id="P35816"/>
    </source>
</evidence>
<evidence type="ECO:0000250" key="3">
    <source>
        <dbReference type="UniProtKB" id="Q504M2"/>
    </source>
</evidence>
<evidence type="ECO:0000255" key="4"/>
<evidence type="ECO:0000255" key="5">
    <source>
        <dbReference type="PROSITE-ProRule" id="PRU01082"/>
    </source>
</evidence>
<evidence type="ECO:0000305" key="6"/>
<evidence type="ECO:0000312" key="7">
    <source>
        <dbReference type="HGNC" id="HGNC:30263"/>
    </source>
</evidence>
<dbReference type="EC" id="3.1.3.43" evidence="1"/>
<dbReference type="EMBL" id="AB037769">
    <property type="protein sequence ID" value="BAA92586.1"/>
    <property type="status" value="ALT_INIT"/>
    <property type="molecule type" value="mRNA"/>
</dbReference>
<dbReference type="EMBL" id="AK292539">
    <property type="protein sequence ID" value="BAF85228.1"/>
    <property type="molecule type" value="mRNA"/>
</dbReference>
<dbReference type="EMBL" id="CH471092">
    <property type="protein sequence ID" value="EAW83048.1"/>
    <property type="molecule type" value="Genomic_DNA"/>
</dbReference>
<dbReference type="EMBL" id="BC028030">
    <property type="protein sequence ID" value="AAH28030.1"/>
    <property type="molecule type" value="mRNA"/>
</dbReference>
<dbReference type="CCDS" id="CCDS10822.1"/>
<dbReference type="RefSeq" id="NP_001316857.1">
    <property type="nucleotide sequence ID" value="NM_001329928.2"/>
</dbReference>
<dbReference type="RefSeq" id="NP_001316858.1">
    <property type="nucleotide sequence ID" value="NM_001329929.2"/>
</dbReference>
<dbReference type="RefSeq" id="NP_001316859.1">
    <property type="nucleotide sequence ID" value="NM_001329930.2"/>
</dbReference>
<dbReference type="RefSeq" id="NP_001316860.1">
    <property type="nucleotide sequence ID" value="NM_001329931.2"/>
</dbReference>
<dbReference type="RefSeq" id="NP_001316861.1">
    <property type="nucleotide sequence ID" value="NM_001329932.2"/>
</dbReference>
<dbReference type="RefSeq" id="NP_001316862.1">
    <property type="nucleotide sequence ID" value="NM_001329933.2"/>
</dbReference>
<dbReference type="RefSeq" id="NP_001316863.1">
    <property type="nucleotide sequence ID" value="NM_001329934.2"/>
</dbReference>
<dbReference type="RefSeq" id="NP_065837.1">
    <property type="nucleotide sequence ID" value="NM_020786.4"/>
</dbReference>
<dbReference type="SMR" id="Q9P2J9"/>
<dbReference type="BioGRID" id="121604">
    <property type="interactions" value="19"/>
</dbReference>
<dbReference type="FunCoup" id="Q9P2J9">
    <property type="interactions" value="1161"/>
</dbReference>
<dbReference type="IntAct" id="Q9P2J9">
    <property type="interactions" value="15"/>
</dbReference>
<dbReference type="MINT" id="Q9P2J9"/>
<dbReference type="STRING" id="9606.ENSP00000309548"/>
<dbReference type="DEPOD" id="PDP2"/>
<dbReference type="GlyGen" id="Q9P2J9">
    <property type="glycosylation" value="1 site, 1 N-linked glycan (1 site)"/>
</dbReference>
<dbReference type="iPTMnet" id="Q9P2J9"/>
<dbReference type="PhosphoSitePlus" id="Q9P2J9"/>
<dbReference type="BioMuta" id="PDP2"/>
<dbReference type="DMDM" id="12585321"/>
<dbReference type="jPOST" id="Q9P2J9"/>
<dbReference type="MassIVE" id="Q9P2J9"/>
<dbReference type="PaxDb" id="9606-ENSP00000309548"/>
<dbReference type="PeptideAtlas" id="Q9P2J9"/>
<dbReference type="ProteomicsDB" id="83825"/>
<dbReference type="Pumba" id="Q9P2J9"/>
<dbReference type="Antibodypedia" id="15590">
    <property type="antibodies" value="143 antibodies from 25 providers"/>
</dbReference>
<dbReference type="DNASU" id="57546"/>
<dbReference type="Ensembl" id="ENST00000311765.4">
    <property type="protein sequence ID" value="ENSP00000309548.2"/>
    <property type="gene ID" value="ENSG00000172840.7"/>
</dbReference>
<dbReference type="GeneID" id="57546"/>
<dbReference type="KEGG" id="hsa:57546"/>
<dbReference type="MANE-Select" id="ENST00000311765.4">
    <property type="protein sequence ID" value="ENSP00000309548.2"/>
    <property type="RefSeq nucleotide sequence ID" value="NM_020786.4"/>
    <property type="RefSeq protein sequence ID" value="NP_065837.1"/>
</dbReference>
<dbReference type="UCSC" id="uc002eqk.3">
    <property type="organism name" value="human"/>
</dbReference>
<dbReference type="AGR" id="HGNC:30263"/>
<dbReference type="CTD" id="57546"/>
<dbReference type="DisGeNET" id="57546"/>
<dbReference type="GeneCards" id="PDP2"/>
<dbReference type="HGNC" id="HGNC:30263">
    <property type="gene designation" value="PDP2"/>
</dbReference>
<dbReference type="HPA" id="ENSG00000172840">
    <property type="expression patterns" value="Low tissue specificity"/>
</dbReference>
<dbReference type="MalaCards" id="PDP2"/>
<dbReference type="MIM" id="615499">
    <property type="type" value="gene"/>
</dbReference>
<dbReference type="neXtProt" id="NX_Q9P2J9"/>
<dbReference type="OpenTargets" id="ENSG00000172840"/>
<dbReference type="PharmGKB" id="PA165450460"/>
<dbReference type="VEuPathDB" id="HostDB:ENSG00000172840"/>
<dbReference type="eggNOG" id="KOG0700">
    <property type="taxonomic scope" value="Eukaryota"/>
</dbReference>
<dbReference type="GeneTree" id="ENSGT00940000160687"/>
<dbReference type="HOGENOM" id="CLU_021928_0_0_1"/>
<dbReference type="InParanoid" id="Q9P2J9"/>
<dbReference type="OMA" id="DHNAWNP"/>
<dbReference type="OrthoDB" id="420076at2759"/>
<dbReference type="PAN-GO" id="Q9P2J9">
    <property type="GO annotations" value="4 GO annotations based on evolutionary models"/>
</dbReference>
<dbReference type="PhylomeDB" id="Q9P2J9"/>
<dbReference type="TreeFam" id="TF313505"/>
<dbReference type="BRENDA" id="3.1.3.43">
    <property type="organism ID" value="2681"/>
</dbReference>
<dbReference type="PathwayCommons" id="Q9P2J9"/>
<dbReference type="Reactome" id="R-HSA-204174">
    <property type="pathway name" value="Regulation of pyruvate dehydrogenase (PDH) complex"/>
</dbReference>
<dbReference type="SignaLink" id="Q9P2J9"/>
<dbReference type="SIGNOR" id="Q9P2J9"/>
<dbReference type="BioGRID-ORCS" id="57546">
    <property type="hits" value="19 hits in 1175 CRISPR screens"/>
</dbReference>
<dbReference type="ChiTaRS" id="PDP2">
    <property type="organism name" value="human"/>
</dbReference>
<dbReference type="GenomeRNAi" id="57546"/>
<dbReference type="Pharos" id="Q9P2J9">
    <property type="development level" value="Tbio"/>
</dbReference>
<dbReference type="PRO" id="PR:Q9P2J9"/>
<dbReference type="Proteomes" id="UP000005640">
    <property type="component" value="Chromosome 16"/>
</dbReference>
<dbReference type="RNAct" id="Q9P2J9">
    <property type="molecule type" value="protein"/>
</dbReference>
<dbReference type="Bgee" id="ENSG00000172840">
    <property type="expression patterns" value="Expressed in ileal mucosa and 165 other cell types or tissues"/>
</dbReference>
<dbReference type="ExpressionAtlas" id="Q9P2J9">
    <property type="expression patterns" value="baseline and differential"/>
</dbReference>
<dbReference type="GO" id="GO:0005759">
    <property type="term" value="C:mitochondrial matrix"/>
    <property type="evidence" value="ECO:0000304"/>
    <property type="project" value="Reactome"/>
</dbReference>
<dbReference type="GO" id="GO:0005739">
    <property type="term" value="C:mitochondrion"/>
    <property type="evidence" value="ECO:0006056"/>
    <property type="project" value="FlyBase"/>
</dbReference>
<dbReference type="GO" id="GO:0004741">
    <property type="term" value="F:[pyruvate dehydrogenase (acetyl-transferring)]-phosphatase activity"/>
    <property type="evidence" value="ECO:0000250"/>
    <property type="project" value="UniProtKB"/>
</dbReference>
<dbReference type="GO" id="GO:0046872">
    <property type="term" value="F:metal ion binding"/>
    <property type="evidence" value="ECO:0007669"/>
    <property type="project" value="UniProtKB-KW"/>
</dbReference>
<dbReference type="GO" id="GO:0007165">
    <property type="term" value="P:signal transduction"/>
    <property type="evidence" value="ECO:0000318"/>
    <property type="project" value="GO_Central"/>
</dbReference>
<dbReference type="GO" id="GO:0042093">
    <property type="term" value="P:T-helper cell differentiation"/>
    <property type="evidence" value="ECO:0000250"/>
    <property type="project" value="UniProtKB"/>
</dbReference>
<dbReference type="CDD" id="cd00143">
    <property type="entry name" value="PP2Cc"/>
    <property type="match status" value="1"/>
</dbReference>
<dbReference type="FunFam" id="3.60.40.10:FF:000006">
    <property type="entry name" value="Pyruvate dehyrogenase phosphatase catalytic subunit 1"/>
    <property type="match status" value="1"/>
</dbReference>
<dbReference type="Gene3D" id="3.60.40.10">
    <property type="entry name" value="PPM-type phosphatase domain"/>
    <property type="match status" value="1"/>
</dbReference>
<dbReference type="InterPro" id="IPR015655">
    <property type="entry name" value="PP2C"/>
</dbReference>
<dbReference type="InterPro" id="IPR000222">
    <property type="entry name" value="PP2C_BS"/>
</dbReference>
<dbReference type="InterPro" id="IPR036457">
    <property type="entry name" value="PPM-type-like_dom_sf"/>
</dbReference>
<dbReference type="InterPro" id="IPR001932">
    <property type="entry name" value="PPM-type_phosphatase-like_dom"/>
</dbReference>
<dbReference type="PANTHER" id="PTHR13832:SF343">
    <property type="entry name" value="[PYRUVATE DEHYDROGENASE [ACETYL-TRANSFERRING]]-PHOSPHATASE 2, MITOCHONDRIAL"/>
    <property type="match status" value="1"/>
</dbReference>
<dbReference type="PANTHER" id="PTHR13832">
    <property type="entry name" value="PROTEIN PHOSPHATASE 2C"/>
    <property type="match status" value="1"/>
</dbReference>
<dbReference type="Pfam" id="PF00481">
    <property type="entry name" value="PP2C"/>
    <property type="match status" value="1"/>
</dbReference>
<dbReference type="SMART" id="SM00332">
    <property type="entry name" value="PP2Cc"/>
    <property type="match status" value="1"/>
</dbReference>
<dbReference type="SUPFAM" id="SSF81606">
    <property type="entry name" value="PP2C-like"/>
    <property type="match status" value="1"/>
</dbReference>
<dbReference type="PROSITE" id="PS01032">
    <property type="entry name" value="PPM_1"/>
    <property type="match status" value="1"/>
</dbReference>
<dbReference type="PROSITE" id="PS51746">
    <property type="entry name" value="PPM_2"/>
    <property type="match status" value="1"/>
</dbReference>
<proteinExistence type="evidence at protein level"/>
<name>PDP2_HUMAN</name>
<sequence length="529" mass="59978">MSSTVSYWILNSTRNSIATLQGGRRLYSRYVSNRNKLKWRLFSRVPPTLNSSPCGGFTLCKAYRHTSTEEDDFHLQLSPEQINEVLRAGETTHKILDLESRVPNSVLRFESNQLAANSPVEDRRGVASCLQTNGLMFGIFDGHGGHACAQAVSERLFYYVAVSLMSHQTLEHMEGAMESMKPLLPILHWLKHPGDSIYKDVTSVHLDHLRVYWQELLDLHMEMGLSIEEALMYSFQRLDSDISLEIQAPLEDEVTRNLSLQVAFSGATACMAHVDGIHLHVANAGDCRAILGVQEDNGMWSCLPLTRDHNAWNQAELSRLKREHPESEDRTIIMEDRLLGVLIPCRAFGDVQLKWSKELQRSILERGFNTEALNIYQFTPPHYYTPPYLTAEPEVTYHRLRPQDKFLVLASDGLWDMLSNEDVVRLVVGHLAEADWHKTDLAQRPANLGLMQSLLLQRKASGLHEADQNAATRLIRHAIGNNEYGEMEAERLAAMLTLPEDLARMYRDDITVTVVYFNSESIGAYYKGG</sequence>